<organism>
    <name type="scientific">Staphylococcus aureus (strain MRSA252)</name>
    <dbReference type="NCBI Taxonomy" id="282458"/>
    <lineage>
        <taxon>Bacteria</taxon>
        <taxon>Bacillati</taxon>
        <taxon>Bacillota</taxon>
        <taxon>Bacilli</taxon>
        <taxon>Bacillales</taxon>
        <taxon>Staphylococcaceae</taxon>
        <taxon>Staphylococcus</taxon>
    </lineage>
</organism>
<protein>
    <recommendedName>
        <fullName evidence="1">2-isopropylmalate synthase</fullName>
        <ecNumber evidence="1">2.3.3.13</ecNumber>
    </recommendedName>
    <alternativeName>
        <fullName evidence="1">Alpha-IPM synthase</fullName>
    </alternativeName>
    <alternativeName>
        <fullName evidence="1">Alpha-isopropylmalate synthase</fullName>
    </alternativeName>
</protein>
<evidence type="ECO:0000255" key="1">
    <source>
        <dbReference type="HAMAP-Rule" id="MF_01025"/>
    </source>
</evidence>
<proteinExistence type="inferred from homology"/>
<gene>
    <name evidence="1" type="primary">leuA</name>
    <name type="ordered locus">SAR2144</name>
</gene>
<name>LEU1_STAAR</name>
<keyword id="KW-0028">Amino-acid biosynthesis</keyword>
<keyword id="KW-0100">Branched-chain amino acid biosynthesis</keyword>
<keyword id="KW-0963">Cytoplasm</keyword>
<keyword id="KW-0432">Leucine biosynthesis</keyword>
<keyword id="KW-0464">Manganese</keyword>
<keyword id="KW-0479">Metal-binding</keyword>
<keyword id="KW-0808">Transferase</keyword>
<comment type="function">
    <text evidence="1">Catalyzes the condensation of the acetyl group of acetyl-CoA with 3-methyl-2-oxobutanoate (2-ketoisovalerate) to form 3-carboxy-3-hydroxy-4-methylpentanoate (2-isopropylmalate).</text>
</comment>
<comment type="catalytic activity">
    <reaction evidence="1">
        <text>3-methyl-2-oxobutanoate + acetyl-CoA + H2O = (2S)-2-isopropylmalate + CoA + H(+)</text>
        <dbReference type="Rhea" id="RHEA:21524"/>
        <dbReference type="ChEBI" id="CHEBI:1178"/>
        <dbReference type="ChEBI" id="CHEBI:11851"/>
        <dbReference type="ChEBI" id="CHEBI:15377"/>
        <dbReference type="ChEBI" id="CHEBI:15378"/>
        <dbReference type="ChEBI" id="CHEBI:57287"/>
        <dbReference type="ChEBI" id="CHEBI:57288"/>
        <dbReference type="EC" id="2.3.3.13"/>
    </reaction>
</comment>
<comment type="cofactor">
    <cofactor evidence="1">
        <name>Mn(2+)</name>
        <dbReference type="ChEBI" id="CHEBI:29035"/>
    </cofactor>
</comment>
<comment type="pathway">
    <text evidence="1">Amino-acid biosynthesis; L-leucine biosynthesis; L-leucine from 3-methyl-2-oxobutanoate: step 1/4.</text>
</comment>
<comment type="subunit">
    <text evidence="1">Homodimer.</text>
</comment>
<comment type="subcellular location">
    <subcellularLocation>
        <location evidence="1">Cytoplasm</location>
    </subcellularLocation>
</comment>
<comment type="similarity">
    <text evidence="1">Belongs to the alpha-IPM synthase/homocitrate synthase family. LeuA type 1 subfamily.</text>
</comment>
<sequence length="509" mass="55702">MSSHIQIFDTTLRDGEQTPGVNFTFDERLRIALQLEKWGVDVIEAGFPASSTGSFKSVQAIAQTLTTTAVCGLARCKKSDIDAVYEATKDAAKPVVHVFIATSPIHLEHKLKMSQEDVLASIKEHVTYAKQLFDVVQFSPEDATRTELPFLVKCVQTAVDAGATVINIPDTVGYSYHDEYAHIFKTLTESVTSSNEIIYSAHCHDDLGMAVSNSLAAIEGGARRIEGTVNGIGERAGNAALEEVALALYIRNDHYGAQTALNLEETKKTSDLISRYAGIRVPRNKAIVGQNAFSHESGIHQDGVLKHRETYEIMTPQLVGVSTTELPLGKLSGKHAFSKKLKALGYDIDKEAQIDLFKQFKAIADKKKSVSDRDIHAIIQGSEHEHQALYKLETLQLQYVSSGLQSAVVVIKDKEGHIYQDSSIGTGSIVAIYNAVDRIFQKETELIDYRINSVTEGTDAQAEVHVNLLIEGKTVNGFGIDHDILQASCKAYVEAHAKFAAENVEKVGN</sequence>
<dbReference type="EC" id="2.3.3.13" evidence="1"/>
<dbReference type="EMBL" id="BX571856">
    <property type="protein sequence ID" value="CAG41125.1"/>
    <property type="molecule type" value="Genomic_DNA"/>
</dbReference>
<dbReference type="RefSeq" id="WP_000094573.1">
    <property type="nucleotide sequence ID" value="NC_002952.2"/>
</dbReference>
<dbReference type="SMR" id="Q6GF16"/>
<dbReference type="KEGG" id="sar:SAR2144"/>
<dbReference type="HOGENOM" id="CLU_022158_0_1_9"/>
<dbReference type="UniPathway" id="UPA00048">
    <property type="reaction ID" value="UER00070"/>
</dbReference>
<dbReference type="Proteomes" id="UP000000596">
    <property type="component" value="Chromosome"/>
</dbReference>
<dbReference type="GO" id="GO:0005737">
    <property type="term" value="C:cytoplasm"/>
    <property type="evidence" value="ECO:0007669"/>
    <property type="project" value="UniProtKB-SubCell"/>
</dbReference>
<dbReference type="GO" id="GO:0003852">
    <property type="term" value="F:2-isopropylmalate synthase activity"/>
    <property type="evidence" value="ECO:0007669"/>
    <property type="project" value="UniProtKB-UniRule"/>
</dbReference>
<dbReference type="GO" id="GO:0003985">
    <property type="term" value="F:acetyl-CoA C-acetyltransferase activity"/>
    <property type="evidence" value="ECO:0007669"/>
    <property type="project" value="UniProtKB-UniRule"/>
</dbReference>
<dbReference type="GO" id="GO:0030145">
    <property type="term" value="F:manganese ion binding"/>
    <property type="evidence" value="ECO:0007669"/>
    <property type="project" value="UniProtKB-UniRule"/>
</dbReference>
<dbReference type="GO" id="GO:0009098">
    <property type="term" value="P:L-leucine biosynthetic process"/>
    <property type="evidence" value="ECO:0007669"/>
    <property type="project" value="UniProtKB-UniRule"/>
</dbReference>
<dbReference type="CDD" id="cd07940">
    <property type="entry name" value="DRE_TIM_IPMS"/>
    <property type="match status" value="1"/>
</dbReference>
<dbReference type="FunFam" id="1.10.238.260:FF:000001">
    <property type="entry name" value="2-isopropylmalate synthase"/>
    <property type="match status" value="1"/>
</dbReference>
<dbReference type="FunFam" id="3.20.20.70:FF:000010">
    <property type="entry name" value="2-isopropylmalate synthase"/>
    <property type="match status" value="1"/>
</dbReference>
<dbReference type="FunFam" id="3.30.160.270:FF:000003">
    <property type="entry name" value="2-isopropylmalate synthase"/>
    <property type="match status" value="1"/>
</dbReference>
<dbReference type="Gene3D" id="1.10.238.260">
    <property type="match status" value="1"/>
</dbReference>
<dbReference type="Gene3D" id="3.30.160.270">
    <property type="match status" value="1"/>
</dbReference>
<dbReference type="Gene3D" id="3.20.20.70">
    <property type="entry name" value="Aldolase class I"/>
    <property type="match status" value="1"/>
</dbReference>
<dbReference type="HAMAP" id="MF_01025">
    <property type="entry name" value="LeuA_type1"/>
    <property type="match status" value="1"/>
</dbReference>
<dbReference type="InterPro" id="IPR050073">
    <property type="entry name" value="2-IPM_HCS-like"/>
</dbReference>
<dbReference type="InterPro" id="IPR013709">
    <property type="entry name" value="2-isopropylmalate_synth_dimer"/>
</dbReference>
<dbReference type="InterPro" id="IPR013785">
    <property type="entry name" value="Aldolase_TIM"/>
</dbReference>
<dbReference type="InterPro" id="IPR054691">
    <property type="entry name" value="LeuA/HCS_post-cat"/>
</dbReference>
<dbReference type="InterPro" id="IPR036230">
    <property type="entry name" value="LeuA_allosteric_dom_sf"/>
</dbReference>
<dbReference type="InterPro" id="IPR005671">
    <property type="entry name" value="LeuA_bact_synth"/>
</dbReference>
<dbReference type="InterPro" id="IPR000891">
    <property type="entry name" value="PYR_CT"/>
</dbReference>
<dbReference type="NCBIfam" id="TIGR00973">
    <property type="entry name" value="leuA_bact"/>
    <property type="match status" value="1"/>
</dbReference>
<dbReference type="NCBIfam" id="NF002086">
    <property type="entry name" value="PRK00915.1-3"/>
    <property type="match status" value="1"/>
</dbReference>
<dbReference type="NCBIfam" id="NF002088">
    <property type="entry name" value="PRK00915.1-5"/>
    <property type="match status" value="1"/>
</dbReference>
<dbReference type="PANTHER" id="PTHR10277:SF9">
    <property type="entry name" value="2-ISOPROPYLMALATE SYNTHASE 1, CHLOROPLASTIC-RELATED"/>
    <property type="match status" value="1"/>
</dbReference>
<dbReference type="PANTHER" id="PTHR10277">
    <property type="entry name" value="HOMOCITRATE SYNTHASE-RELATED"/>
    <property type="match status" value="1"/>
</dbReference>
<dbReference type="Pfam" id="PF22617">
    <property type="entry name" value="HCS_D2"/>
    <property type="match status" value="1"/>
</dbReference>
<dbReference type="Pfam" id="PF00682">
    <property type="entry name" value="HMGL-like"/>
    <property type="match status" value="1"/>
</dbReference>
<dbReference type="Pfam" id="PF08502">
    <property type="entry name" value="LeuA_dimer"/>
    <property type="match status" value="1"/>
</dbReference>
<dbReference type="SMART" id="SM00917">
    <property type="entry name" value="LeuA_dimer"/>
    <property type="match status" value="1"/>
</dbReference>
<dbReference type="SUPFAM" id="SSF110921">
    <property type="entry name" value="2-isopropylmalate synthase LeuA, allosteric (dimerisation) domain"/>
    <property type="match status" value="1"/>
</dbReference>
<dbReference type="SUPFAM" id="SSF51569">
    <property type="entry name" value="Aldolase"/>
    <property type="match status" value="1"/>
</dbReference>
<dbReference type="PROSITE" id="PS50991">
    <property type="entry name" value="PYR_CT"/>
    <property type="match status" value="1"/>
</dbReference>
<feature type="chain" id="PRO_0000140381" description="2-isopropylmalate synthase">
    <location>
        <begin position="1"/>
        <end position="509"/>
    </location>
</feature>
<feature type="domain" description="Pyruvate carboxyltransferase" evidence="1">
    <location>
        <begin position="5"/>
        <end position="267"/>
    </location>
</feature>
<feature type="region of interest" description="Regulatory domain" evidence="1">
    <location>
        <begin position="391"/>
        <end position="509"/>
    </location>
</feature>
<feature type="binding site" evidence="1">
    <location>
        <position position="14"/>
    </location>
    <ligand>
        <name>Mn(2+)</name>
        <dbReference type="ChEBI" id="CHEBI:29035"/>
    </ligand>
</feature>
<feature type="binding site" evidence="1">
    <location>
        <position position="202"/>
    </location>
    <ligand>
        <name>Mn(2+)</name>
        <dbReference type="ChEBI" id="CHEBI:29035"/>
    </ligand>
</feature>
<feature type="binding site" evidence="1">
    <location>
        <position position="204"/>
    </location>
    <ligand>
        <name>Mn(2+)</name>
        <dbReference type="ChEBI" id="CHEBI:29035"/>
    </ligand>
</feature>
<feature type="binding site" evidence="1">
    <location>
        <position position="238"/>
    </location>
    <ligand>
        <name>Mn(2+)</name>
        <dbReference type="ChEBI" id="CHEBI:29035"/>
    </ligand>
</feature>
<accession>Q6GF16</accession>
<reference key="1">
    <citation type="journal article" date="2004" name="Proc. Natl. Acad. Sci. U.S.A.">
        <title>Complete genomes of two clinical Staphylococcus aureus strains: evidence for the rapid evolution of virulence and drug resistance.</title>
        <authorList>
            <person name="Holden M.T.G."/>
            <person name="Feil E.J."/>
            <person name="Lindsay J.A."/>
            <person name="Peacock S.J."/>
            <person name="Day N.P.J."/>
            <person name="Enright M.C."/>
            <person name="Foster T.J."/>
            <person name="Moore C.E."/>
            <person name="Hurst L."/>
            <person name="Atkin R."/>
            <person name="Barron A."/>
            <person name="Bason N."/>
            <person name="Bentley S.D."/>
            <person name="Chillingworth C."/>
            <person name="Chillingworth T."/>
            <person name="Churcher C."/>
            <person name="Clark L."/>
            <person name="Corton C."/>
            <person name="Cronin A."/>
            <person name="Doggett J."/>
            <person name="Dowd L."/>
            <person name="Feltwell T."/>
            <person name="Hance Z."/>
            <person name="Harris B."/>
            <person name="Hauser H."/>
            <person name="Holroyd S."/>
            <person name="Jagels K."/>
            <person name="James K.D."/>
            <person name="Lennard N."/>
            <person name="Line A."/>
            <person name="Mayes R."/>
            <person name="Moule S."/>
            <person name="Mungall K."/>
            <person name="Ormond D."/>
            <person name="Quail M.A."/>
            <person name="Rabbinowitsch E."/>
            <person name="Rutherford K.M."/>
            <person name="Sanders M."/>
            <person name="Sharp S."/>
            <person name="Simmonds M."/>
            <person name="Stevens K."/>
            <person name="Whitehead S."/>
            <person name="Barrell B.G."/>
            <person name="Spratt B.G."/>
            <person name="Parkhill J."/>
        </authorList>
    </citation>
    <scope>NUCLEOTIDE SEQUENCE [LARGE SCALE GENOMIC DNA]</scope>
    <source>
        <strain>MRSA252</strain>
    </source>
</reference>